<organism>
    <name type="scientific">Homo sapiens</name>
    <name type="common">Human</name>
    <dbReference type="NCBI Taxonomy" id="9606"/>
    <lineage>
        <taxon>Eukaryota</taxon>
        <taxon>Metazoa</taxon>
        <taxon>Chordata</taxon>
        <taxon>Craniata</taxon>
        <taxon>Vertebrata</taxon>
        <taxon>Euteleostomi</taxon>
        <taxon>Mammalia</taxon>
        <taxon>Eutheria</taxon>
        <taxon>Euarchontoglires</taxon>
        <taxon>Primates</taxon>
        <taxon>Haplorrhini</taxon>
        <taxon>Catarrhini</taxon>
        <taxon>Hominidae</taxon>
        <taxon>Homo</taxon>
    </lineage>
</organism>
<reference key="1">
    <citation type="journal article" date="1999" name="Nature">
        <title>The DNA sequence of human chromosome 22.</title>
        <authorList>
            <person name="Dunham I."/>
            <person name="Hunt A.R."/>
            <person name="Collins J.E."/>
            <person name="Bruskiewich R."/>
            <person name="Beare D.M."/>
            <person name="Clamp M."/>
            <person name="Smink L.J."/>
            <person name="Ainscough R."/>
            <person name="Almeida J.P."/>
            <person name="Babbage A.K."/>
            <person name="Bagguley C."/>
            <person name="Bailey J."/>
            <person name="Barlow K.F."/>
            <person name="Bates K.N."/>
            <person name="Beasley O.P."/>
            <person name="Bird C.P."/>
            <person name="Blakey S.E."/>
            <person name="Bridgeman A.M."/>
            <person name="Buck D."/>
            <person name="Burgess J."/>
            <person name="Burrill W.D."/>
            <person name="Burton J."/>
            <person name="Carder C."/>
            <person name="Carter N.P."/>
            <person name="Chen Y."/>
            <person name="Clark G."/>
            <person name="Clegg S.M."/>
            <person name="Cobley V.E."/>
            <person name="Cole C.G."/>
            <person name="Collier R.E."/>
            <person name="Connor R."/>
            <person name="Conroy D."/>
            <person name="Corby N.R."/>
            <person name="Coville G.J."/>
            <person name="Cox A.V."/>
            <person name="Davis J."/>
            <person name="Dawson E."/>
            <person name="Dhami P.D."/>
            <person name="Dockree C."/>
            <person name="Dodsworth S.J."/>
            <person name="Durbin R.M."/>
            <person name="Ellington A.G."/>
            <person name="Evans K.L."/>
            <person name="Fey J.M."/>
            <person name="Fleming K."/>
            <person name="French L."/>
            <person name="Garner A.A."/>
            <person name="Gilbert J.G.R."/>
            <person name="Goward M.E."/>
            <person name="Grafham D.V."/>
            <person name="Griffiths M.N.D."/>
            <person name="Hall C."/>
            <person name="Hall R.E."/>
            <person name="Hall-Tamlyn G."/>
            <person name="Heathcott R.W."/>
            <person name="Ho S."/>
            <person name="Holmes S."/>
            <person name="Hunt S.E."/>
            <person name="Jones M.C."/>
            <person name="Kershaw J."/>
            <person name="Kimberley A.M."/>
            <person name="King A."/>
            <person name="Laird G.K."/>
            <person name="Langford C.F."/>
            <person name="Leversha M.A."/>
            <person name="Lloyd C."/>
            <person name="Lloyd D.M."/>
            <person name="Martyn I.D."/>
            <person name="Mashreghi-Mohammadi M."/>
            <person name="Matthews L.H."/>
            <person name="Mccann O.T."/>
            <person name="Mcclay J."/>
            <person name="Mclaren S."/>
            <person name="McMurray A.A."/>
            <person name="Milne S.A."/>
            <person name="Mortimore B.J."/>
            <person name="Odell C.N."/>
            <person name="Pavitt R."/>
            <person name="Pearce A.V."/>
            <person name="Pearson D."/>
            <person name="Phillimore B.J.C.T."/>
            <person name="Phillips S.H."/>
            <person name="Plumb R.W."/>
            <person name="Ramsay H."/>
            <person name="Ramsey Y."/>
            <person name="Rogers L."/>
            <person name="Ross M.T."/>
            <person name="Scott C.E."/>
            <person name="Sehra H.K."/>
            <person name="Skuce C.D."/>
            <person name="Smalley S."/>
            <person name="Smith M.L."/>
            <person name="Soderlund C."/>
            <person name="Spragon L."/>
            <person name="Steward C.A."/>
            <person name="Sulston J.E."/>
            <person name="Swann R.M."/>
            <person name="Vaudin M."/>
            <person name="Wall M."/>
            <person name="Wallis J.M."/>
            <person name="Whiteley M.N."/>
            <person name="Willey D.L."/>
            <person name="Williams L."/>
            <person name="Williams S.A."/>
            <person name="Williamson H."/>
            <person name="Wilmer T.E."/>
            <person name="Wilming L."/>
            <person name="Wright C.L."/>
            <person name="Hubbard T."/>
            <person name="Bentley D.R."/>
            <person name="Beck S."/>
            <person name="Rogers J."/>
            <person name="Shimizu N."/>
            <person name="Minoshima S."/>
            <person name="Kawasaki K."/>
            <person name="Sasaki T."/>
            <person name="Asakawa S."/>
            <person name="Kudoh J."/>
            <person name="Shintani A."/>
            <person name="Shibuya K."/>
            <person name="Yoshizaki Y."/>
            <person name="Aoki N."/>
            <person name="Mitsuyama S."/>
            <person name="Roe B.A."/>
            <person name="Chen F."/>
            <person name="Chu L."/>
            <person name="Crabtree J."/>
            <person name="Deschamps S."/>
            <person name="Do A."/>
            <person name="Do T."/>
            <person name="Dorman A."/>
            <person name="Fang F."/>
            <person name="Fu Y."/>
            <person name="Hu P."/>
            <person name="Hua A."/>
            <person name="Kenton S."/>
            <person name="Lai H."/>
            <person name="Lao H.I."/>
            <person name="Lewis J."/>
            <person name="Lewis S."/>
            <person name="Lin S.-P."/>
            <person name="Loh P."/>
            <person name="Malaj E."/>
            <person name="Nguyen T."/>
            <person name="Pan H."/>
            <person name="Phan S."/>
            <person name="Qi S."/>
            <person name="Qian Y."/>
            <person name="Ray L."/>
            <person name="Ren Q."/>
            <person name="Shaull S."/>
            <person name="Sloan D."/>
            <person name="Song L."/>
            <person name="Wang Q."/>
            <person name="Wang Y."/>
            <person name="Wang Z."/>
            <person name="White J."/>
            <person name="Willingham D."/>
            <person name="Wu H."/>
            <person name="Yao Z."/>
            <person name="Zhan M."/>
            <person name="Zhang G."/>
            <person name="Chissoe S."/>
            <person name="Murray J."/>
            <person name="Miller N."/>
            <person name="Minx P."/>
            <person name="Fulton R."/>
            <person name="Johnson D."/>
            <person name="Bemis G."/>
            <person name="Bentley D."/>
            <person name="Bradshaw H."/>
            <person name="Bourne S."/>
            <person name="Cordes M."/>
            <person name="Du Z."/>
            <person name="Fulton L."/>
            <person name="Goela D."/>
            <person name="Graves T."/>
            <person name="Hawkins J."/>
            <person name="Hinds K."/>
            <person name="Kemp K."/>
            <person name="Latreille P."/>
            <person name="Layman D."/>
            <person name="Ozersky P."/>
            <person name="Rohlfing T."/>
            <person name="Scheet P."/>
            <person name="Walker C."/>
            <person name="Wamsley A."/>
            <person name="Wohldmann P."/>
            <person name="Pepin K."/>
            <person name="Nelson J."/>
            <person name="Korf I."/>
            <person name="Bedell J.A."/>
            <person name="Hillier L.W."/>
            <person name="Mardis E."/>
            <person name="Waterston R."/>
            <person name="Wilson R."/>
            <person name="Emanuel B.S."/>
            <person name="Shaikh T."/>
            <person name="Kurahashi H."/>
            <person name="Saitta S."/>
            <person name="Budarf M.L."/>
            <person name="McDermid H.E."/>
            <person name="Johnson A."/>
            <person name="Wong A.C.C."/>
            <person name="Morrow B.E."/>
            <person name="Edelmann L."/>
            <person name="Kim U.J."/>
            <person name="Shizuya H."/>
            <person name="Simon M.I."/>
            <person name="Dumanski J.P."/>
            <person name="Peyrard M."/>
            <person name="Kedra D."/>
            <person name="Seroussi E."/>
            <person name="Fransson I."/>
            <person name="Tapia I."/>
            <person name="Bruder C.E."/>
            <person name="O'Brien K.P."/>
            <person name="Wilkinson P."/>
            <person name="Bodenteich A."/>
            <person name="Hartman K."/>
            <person name="Hu X."/>
            <person name="Khan A.S."/>
            <person name="Lane L."/>
            <person name="Tilahun Y."/>
            <person name="Wright H."/>
        </authorList>
    </citation>
    <scope>NUCLEOTIDE SEQUENCE [LARGE SCALE GENOMIC DNA] (IMGT ALLELE IGLV8-61*01)</scope>
</reference>
<reference key="2">
    <citation type="journal article" date="2001" name="Exp. Clin. Immunogenet.">
        <title>Nomenclature of the human immunoglobulin lambda (IGL) genes.</title>
        <authorList>
            <person name="Lefranc M.P."/>
        </authorList>
    </citation>
    <scope>NOMENCLATURE</scope>
</reference>
<reference key="3">
    <citation type="book" date="2001" name="The Immunoglobulin FactsBook.">
        <title>The Immunoglobulin FactsBook.</title>
        <editorList>
            <person name="Lefranc M.P."/>
            <person name="Lefranc G."/>
        </editorList>
        <authorList>
            <person name="Lefranc M.P."/>
            <person name="Lefranc G."/>
        </authorList>
    </citation>
    <scope>NOMENCLATURE</scope>
</reference>
<reference key="4">
    <citation type="journal article" date="2007" name="Annu. Rev. Genet.">
        <title>Immunoglobulin somatic hypermutation.</title>
        <authorList>
            <person name="Teng G."/>
            <person name="Papavasiliou F.N."/>
        </authorList>
    </citation>
    <scope>REVIEW ON SOMATIC HYPERMUTATION</scope>
</reference>
<reference key="5">
    <citation type="journal article" date="2010" name="J. Allergy Clin. Immunol.">
        <title>Structure and function of immunoglobulins.</title>
        <authorList>
            <person name="Schroeder H.W. Jr."/>
            <person name="Cavacini L."/>
        </authorList>
    </citation>
    <scope>REVIEW ON IMMUNOGLOBULINS</scope>
</reference>
<reference key="6">
    <citation type="journal article" date="2012" name="Nat. Rev. Immunol.">
        <title>Molecular programming of B cell memory.</title>
        <authorList>
            <person name="McHeyzer-Williams M."/>
            <person name="Okitsu S."/>
            <person name="Wang N."/>
            <person name="McHeyzer-Williams L."/>
        </authorList>
    </citation>
    <scope>REVIEW ON FUNCTION</scope>
</reference>
<reference key="7">
    <citation type="journal article" date="2014" name="Front. Immunol.">
        <title>Immunoglobulin and T Cell Receptor Genes: IMGT((R)) and the Birth and Rise of Immunoinformatics.</title>
        <authorList>
            <person name="Lefranc M.P."/>
        </authorList>
    </citation>
    <scope>NOMENCLATURE</scope>
</reference>
<accession>A0A075B6I0</accession>
<sequence>MSVPTMAWMMLLLGLLAYGSGVDSQTVVTQEPSFSVSPGGTVTLTCGLSSGSVSTSYYPSWYQQTPGQAPRTLIYSTNTRSSGVPDRFSGSILGNKAALTITGAQADDESDYYCVLYMGSGI</sequence>
<proteinExistence type="evidence at protein level"/>
<feature type="signal peptide" evidence="2">
    <location>
        <begin position="1"/>
        <end position="24"/>
    </location>
</feature>
<feature type="chain" id="PRO_5008197239" description="Immunoglobulin lambda variable 8-61" evidence="2">
    <location>
        <begin position="25"/>
        <end position="122"/>
    </location>
</feature>
<feature type="domain" description="Ig-like" evidence="3">
    <location>
        <begin position="25"/>
        <end position="122" status="greater than"/>
    </location>
</feature>
<feature type="region of interest" description="Framework-1" evidence="1">
    <location>
        <begin position="25"/>
        <end position="49"/>
    </location>
</feature>
<feature type="region of interest" description="Complementarity-determining-1" evidence="1">
    <location>
        <begin position="50"/>
        <end position="58"/>
    </location>
</feature>
<feature type="region of interest" description="Framework-2" evidence="1">
    <location>
        <begin position="59"/>
        <end position="75"/>
    </location>
</feature>
<feature type="region of interest" description="Complementarity-determining-2" evidence="1">
    <location>
        <begin position="76"/>
        <end position="78"/>
    </location>
</feature>
<feature type="region of interest" description="Framework-3" evidence="1">
    <location>
        <begin position="79"/>
        <end position="114"/>
    </location>
</feature>
<feature type="region of interest" description="Complementarity-determining-3" evidence="1">
    <location>
        <begin position="115"/>
        <end position="122" status="greater than"/>
    </location>
</feature>
<feature type="disulfide bond" evidence="3">
    <location>
        <begin position="46"/>
        <end position="114"/>
    </location>
</feature>
<feature type="non-terminal residue">
    <location>
        <position position="122"/>
    </location>
</feature>
<dbReference type="EMBL" id="AC245517">
    <property type="status" value="NOT_ANNOTATED_CDS"/>
    <property type="molecule type" value="Genomic_DNA"/>
</dbReference>
<dbReference type="EMDB" id="EMD-25808"/>
<dbReference type="SMR" id="A0A075B6I0"/>
<dbReference type="FunCoup" id="A0A075B6I0">
    <property type="interactions" value="295"/>
</dbReference>
<dbReference type="IMGT_GENE-DB" id="IGLV8-61"/>
<dbReference type="BioMuta" id="IGLV8-61"/>
<dbReference type="MassIVE" id="A0A075B6I0"/>
<dbReference type="Ensembl" id="ENST00000390283.2">
    <property type="protein sequence ID" value="ENSP00000374818.2"/>
    <property type="gene ID" value="ENSG00000211638.2"/>
</dbReference>
<dbReference type="UCSC" id="uc062cbc.1">
    <property type="organism name" value="human"/>
</dbReference>
<dbReference type="AGR" id="HGNC:5931"/>
<dbReference type="GeneCards" id="IGLV8-61"/>
<dbReference type="HGNC" id="HGNC:5931">
    <property type="gene designation" value="IGLV8-61"/>
</dbReference>
<dbReference type="HPA" id="ENSG00000211638">
    <property type="expression patterns" value="Tissue enhanced (intestine, lymphoid tissue)"/>
</dbReference>
<dbReference type="neXtProt" id="NX_A0A075B6I0"/>
<dbReference type="OpenTargets" id="ENSG00000211638"/>
<dbReference type="VEuPathDB" id="HostDB:ENSG00000211638"/>
<dbReference type="GeneTree" id="ENSGT00940000156298"/>
<dbReference type="HOGENOM" id="CLU_077975_4_0_1"/>
<dbReference type="InParanoid" id="A0A075B6I0"/>
<dbReference type="OMA" id="PRWYQQT"/>
<dbReference type="OrthoDB" id="8908372at2759"/>
<dbReference type="PAN-GO" id="A0A075B6I0">
    <property type="GO annotations" value="3 GO annotations based on evolutionary models"/>
</dbReference>
<dbReference type="SignaLink" id="A0A075B6I0"/>
<dbReference type="ChiTaRS" id="IGLV8-61">
    <property type="organism name" value="human"/>
</dbReference>
<dbReference type="Pharos" id="A0A075B6I0">
    <property type="development level" value="Tdark"/>
</dbReference>
<dbReference type="PRO" id="PR:A0A075B6I0"/>
<dbReference type="Proteomes" id="UP000005640">
    <property type="component" value="Chromosome 22"/>
</dbReference>
<dbReference type="RNAct" id="A0A075B6I0">
    <property type="molecule type" value="protein"/>
</dbReference>
<dbReference type="Bgee" id="ENSG00000211638">
    <property type="expression patterns" value="Expressed in duodenum and 88 other cell types or tissues"/>
</dbReference>
<dbReference type="GO" id="GO:0005576">
    <property type="term" value="C:extracellular region"/>
    <property type="evidence" value="ECO:0007669"/>
    <property type="project" value="UniProtKB-SubCell"/>
</dbReference>
<dbReference type="GO" id="GO:0019814">
    <property type="term" value="C:immunoglobulin complex"/>
    <property type="evidence" value="ECO:0000318"/>
    <property type="project" value="GO_Central"/>
</dbReference>
<dbReference type="GO" id="GO:0005886">
    <property type="term" value="C:plasma membrane"/>
    <property type="evidence" value="ECO:0007669"/>
    <property type="project" value="UniProtKB-SubCell"/>
</dbReference>
<dbReference type="GO" id="GO:0002250">
    <property type="term" value="P:adaptive immune response"/>
    <property type="evidence" value="ECO:0007669"/>
    <property type="project" value="UniProtKB-KW"/>
</dbReference>
<dbReference type="GO" id="GO:0006955">
    <property type="term" value="P:immune response"/>
    <property type="evidence" value="ECO:0000318"/>
    <property type="project" value="GO_Central"/>
</dbReference>
<dbReference type="FunFam" id="2.60.40.10:FF:001700">
    <property type="entry name" value="Immunoglobulin lambda variable 8-61"/>
    <property type="match status" value="1"/>
</dbReference>
<dbReference type="Gene3D" id="2.60.40.10">
    <property type="entry name" value="Immunoglobulins"/>
    <property type="match status" value="1"/>
</dbReference>
<dbReference type="InterPro" id="IPR007110">
    <property type="entry name" value="Ig-like_dom"/>
</dbReference>
<dbReference type="InterPro" id="IPR036179">
    <property type="entry name" value="Ig-like_dom_sf"/>
</dbReference>
<dbReference type="InterPro" id="IPR013783">
    <property type="entry name" value="Ig-like_fold"/>
</dbReference>
<dbReference type="InterPro" id="IPR003599">
    <property type="entry name" value="Ig_sub"/>
</dbReference>
<dbReference type="InterPro" id="IPR013106">
    <property type="entry name" value="Ig_V-set"/>
</dbReference>
<dbReference type="InterPro" id="IPR050150">
    <property type="entry name" value="IgV_Light_Chain"/>
</dbReference>
<dbReference type="PANTHER" id="PTHR23267">
    <property type="entry name" value="IMMUNOGLOBULIN LIGHT CHAIN"/>
    <property type="match status" value="1"/>
</dbReference>
<dbReference type="Pfam" id="PF07686">
    <property type="entry name" value="V-set"/>
    <property type="match status" value="1"/>
</dbReference>
<dbReference type="SMART" id="SM00409">
    <property type="entry name" value="IG"/>
    <property type="match status" value="1"/>
</dbReference>
<dbReference type="SMART" id="SM00406">
    <property type="entry name" value="IGv"/>
    <property type="match status" value="1"/>
</dbReference>
<dbReference type="SUPFAM" id="SSF48726">
    <property type="entry name" value="Immunoglobulin"/>
    <property type="match status" value="1"/>
</dbReference>
<dbReference type="PROSITE" id="PS50835">
    <property type="entry name" value="IG_LIKE"/>
    <property type="match status" value="1"/>
</dbReference>
<keyword id="KW-1064">Adaptive immunity</keyword>
<keyword id="KW-1003">Cell membrane</keyword>
<keyword id="KW-1015">Disulfide bond</keyword>
<keyword id="KW-0391">Immunity</keyword>
<keyword id="KW-1280">Immunoglobulin</keyword>
<keyword id="KW-0393">Immunoglobulin domain</keyword>
<keyword id="KW-0472">Membrane</keyword>
<keyword id="KW-1267">Proteomics identification</keyword>
<keyword id="KW-1185">Reference proteome</keyword>
<keyword id="KW-0964">Secreted</keyword>
<keyword id="KW-0732">Signal</keyword>
<evidence type="ECO:0000250" key="1">
    <source>
        <dbReference type="UniProtKB" id="P01721"/>
    </source>
</evidence>
<evidence type="ECO:0000255" key="2"/>
<evidence type="ECO:0000255" key="3">
    <source>
        <dbReference type="PROSITE-ProRule" id="PRU00114"/>
    </source>
</evidence>
<evidence type="ECO:0000303" key="4">
    <source>
    </source>
</evidence>
<evidence type="ECO:0000303" key="5">
    <source>
    </source>
</evidence>
<evidence type="ECO:0000303" key="6">
    <source>
    </source>
</evidence>
<evidence type="ECO:0000303" key="7">
    <source>
    </source>
</evidence>
<evidence type="ECO:0000303" key="8">
    <source>
    </source>
</evidence>
<evidence type="ECO:0000303" key="9">
    <source ref="3"/>
</evidence>
<evidence type="ECO:0000305" key="10"/>
<protein>
    <recommendedName>
        <fullName evidence="4 9">Immunoglobulin lambda variable 8-61</fullName>
    </recommendedName>
</protein>
<name>LV861_HUMAN</name>
<comment type="function">
    <text evidence="5 6 7 8">V region of the variable domain of immunoglobulin light chains that participates in the antigen recognition (PubMed:24600447). Immunoglobulins, also known as antibodies, are membrane-bound or secreted glycoproteins produced by B lymphocytes. In the recognition phase of humoral immunity, the membrane-bound immunoglobulins serve as receptors which, upon binding of a specific antigen, trigger the clonal expansion and differentiation of B lymphocytes into immunoglobulins-secreting plasma cells. Secreted immunoglobulins mediate the effector phase of humoral immunity, which results in the elimination of bound antigens (PubMed:20176268, PubMed:22158414). The antigen binding site is formed by the variable domain of one heavy chain, together with that of its associated light chain. Thus, each immunoglobulin has two antigen binding sites with remarkable affinity for a particular antigen. The variable domains are assembled by a process called V-(D)-J rearrangement and can then be subjected to somatic hypermutations which, after exposure to antigen and selection, allow affinity maturation for a particular antigen (PubMed:17576170, PubMed:20176268).</text>
</comment>
<comment type="subunit">
    <text evidence="6">Immunoglobulins are composed of two identical heavy chains and two identical light chains; disulfide-linked.</text>
</comment>
<comment type="subcellular location">
    <subcellularLocation>
        <location evidence="6 7">Secreted</location>
    </subcellularLocation>
    <subcellularLocation>
        <location evidence="6 7">Cell membrane</location>
    </subcellularLocation>
</comment>
<comment type="polymorphism">
    <text>There are several alleles. The sequence shown is that of IMGT allele IGLV8-61*01.</text>
</comment>
<comment type="caution">
    <text evidence="10">For an example of a full-length immunoglobulin lambda light chain see AC P0DOX8.</text>
</comment>
<gene>
    <name evidence="4 9" type="primary">IGLV8-61</name>
</gene>